<organism>
    <name type="scientific">Vibrio vulnificus (strain YJ016)</name>
    <dbReference type="NCBI Taxonomy" id="196600"/>
    <lineage>
        <taxon>Bacteria</taxon>
        <taxon>Pseudomonadati</taxon>
        <taxon>Pseudomonadota</taxon>
        <taxon>Gammaproteobacteria</taxon>
        <taxon>Vibrionales</taxon>
        <taxon>Vibrionaceae</taxon>
        <taxon>Vibrio</taxon>
    </lineage>
</organism>
<evidence type="ECO:0000255" key="1">
    <source>
        <dbReference type="HAMAP-Rule" id="MF_00009"/>
    </source>
</evidence>
<evidence type="ECO:0000305" key="2"/>
<accession>Q7MN02</accession>
<comment type="function">
    <text evidence="1">Single strand-specific metallo-endoribonuclease involved in late-stage 70S ribosome quality control and in maturation of the 3' terminus of the 16S rRNA.</text>
</comment>
<comment type="cofactor">
    <cofactor evidence="1">
        <name>Zn(2+)</name>
        <dbReference type="ChEBI" id="CHEBI:29105"/>
    </cofactor>
    <text evidence="1">Binds 1 zinc ion.</text>
</comment>
<comment type="subcellular location">
    <subcellularLocation>
        <location evidence="1">Cytoplasm</location>
    </subcellularLocation>
</comment>
<comment type="similarity">
    <text evidence="1">Belongs to the endoribonuclease YbeY family.</text>
</comment>
<comment type="sequence caution" evidence="2">
    <conflict type="erroneous initiation">
        <sequence resource="EMBL-CDS" id="BAC93679"/>
    </conflict>
</comment>
<keyword id="KW-0963">Cytoplasm</keyword>
<keyword id="KW-0255">Endonuclease</keyword>
<keyword id="KW-0378">Hydrolase</keyword>
<keyword id="KW-0479">Metal-binding</keyword>
<keyword id="KW-0540">Nuclease</keyword>
<keyword id="KW-0690">Ribosome biogenesis</keyword>
<keyword id="KW-0698">rRNA processing</keyword>
<keyword id="KW-0862">Zinc</keyword>
<gene>
    <name evidence="1" type="primary">ybeY</name>
    <name type="ordered locus">VV0915</name>
</gene>
<proteinExistence type="inferred from homology"/>
<sequence length="154" mass="17529">MAIELDLQLAVEDQNGLPSAQDFQTWLDKTIPPFQPQAEVTIRIVDSQESHQLNHDYRGKDKPTNVLSFPFEAPPGMEMDLLGDLVICRQVVEQEAIEQDKPLMAHWAHMVVHGSLHLLGYDHIEDDEAEEMESLETEIMQGMGFTDPYLAEKE</sequence>
<name>YBEY_VIBVY</name>
<protein>
    <recommendedName>
        <fullName evidence="1">Endoribonuclease YbeY</fullName>
        <ecNumber evidence="1">3.1.-.-</ecNumber>
    </recommendedName>
</protein>
<feature type="chain" id="PRO_0000102566" description="Endoribonuclease YbeY">
    <location>
        <begin position="1"/>
        <end position="154"/>
    </location>
</feature>
<feature type="binding site" evidence="1">
    <location>
        <position position="113"/>
    </location>
    <ligand>
        <name>Zn(2+)</name>
        <dbReference type="ChEBI" id="CHEBI:29105"/>
        <note>catalytic</note>
    </ligand>
</feature>
<feature type="binding site" evidence="1">
    <location>
        <position position="117"/>
    </location>
    <ligand>
        <name>Zn(2+)</name>
        <dbReference type="ChEBI" id="CHEBI:29105"/>
        <note>catalytic</note>
    </ligand>
</feature>
<feature type="binding site" evidence="1">
    <location>
        <position position="123"/>
    </location>
    <ligand>
        <name>Zn(2+)</name>
        <dbReference type="ChEBI" id="CHEBI:29105"/>
        <note>catalytic</note>
    </ligand>
</feature>
<dbReference type="EC" id="3.1.-.-" evidence="1"/>
<dbReference type="EMBL" id="BA000037">
    <property type="protein sequence ID" value="BAC93679.1"/>
    <property type="status" value="ALT_INIT"/>
    <property type="molecule type" value="Genomic_DNA"/>
</dbReference>
<dbReference type="RefSeq" id="WP_011149714.1">
    <property type="nucleotide sequence ID" value="NC_005139.1"/>
</dbReference>
<dbReference type="SMR" id="Q7MN02"/>
<dbReference type="STRING" id="672.VV93_v1c08520"/>
<dbReference type="KEGG" id="vvy:VV0915"/>
<dbReference type="eggNOG" id="COG0319">
    <property type="taxonomic scope" value="Bacteria"/>
</dbReference>
<dbReference type="HOGENOM" id="CLU_1111040_0_0_6"/>
<dbReference type="Proteomes" id="UP000002675">
    <property type="component" value="Chromosome I"/>
</dbReference>
<dbReference type="GO" id="GO:0005737">
    <property type="term" value="C:cytoplasm"/>
    <property type="evidence" value="ECO:0007669"/>
    <property type="project" value="UniProtKB-SubCell"/>
</dbReference>
<dbReference type="GO" id="GO:0004222">
    <property type="term" value="F:metalloendopeptidase activity"/>
    <property type="evidence" value="ECO:0007669"/>
    <property type="project" value="InterPro"/>
</dbReference>
<dbReference type="GO" id="GO:0004521">
    <property type="term" value="F:RNA endonuclease activity"/>
    <property type="evidence" value="ECO:0007669"/>
    <property type="project" value="UniProtKB-UniRule"/>
</dbReference>
<dbReference type="GO" id="GO:0008270">
    <property type="term" value="F:zinc ion binding"/>
    <property type="evidence" value="ECO:0007669"/>
    <property type="project" value="UniProtKB-UniRule"/>
</dbReference>
<dbReference type="GO" id="GO:0006364">
    <property type="term" value="P:rRNA processing"/>
    <property type="evidence" value="ECO:0007669"/>
    <property type="project" value="UniProtKB-UniRule"/>
</dbReference>
<dbReference type="Gene3D" id="3.40.390.30">
    <property type="entry name" value="Metalloproteases ('zincins'), catalytic domain"/>
    <property type="match status" value="1"/>
</dbReference>
<dbReference type="HAMAP" id="MF_00009">
    <property type="entry name" value="Endoribonucl_YbeY"/>
    <property type="match status" value="1"/>
</dbReference>
<dbReference type="InterPro" id="IPR023091">
    <property type="entry name" value="MetalPrtase_cat_dom_sf_prd"/>
</dbReference>
<dbReference type="InterPro" id="IPR002036">
    <property type="entry name" value="YbeY"/>
</dbReference>
<dbReference type="InterPro" id="IPR020549">
    <property type="entry name" value="YbeY_CS"/>
</dbReference>
<dbReference type="NCBIfam" id="TIGR00043">
    <property type="entry name" value="rRNA maturation RNase YbeY"/>
    <property type="match status" value="1"/>
</dbReference>
<dbReference type="PANTHER" id="PTHR46986">
    <property type="entry name" value="ENDORIBONUCLEASE YBEY, CHLOROPLASTIC"/>
    <property type="match status" value="1"/>
</dbReference>
<dbReference type="PANTHER" id="PTHR46986:SF1">
    <property type="entry name" value="ENDORIBONUCLEASE YBEY, CHLOROPLASTIC"/>
    <property type="match status" value="1"/>
</dbReference>
<dbReference type="Pfam" id="PF02130">
    <property type="entry name" value="YbeY"/>
    <property type="match status" value="1"/>
</dbReference>
<dbReference type="SUPFAM" id="SSF55486">
    <property type="entry name" value="Metalloproteases ('zincins'), catalytic domain"/>
    <property type="match status" value="1"/>
</dbReference>
<dbReference type="PROSITE" id="PS01306">
    <property type="entry name" value="UPF0054"/>
    <property type="match status" value="1"/>
</dbReference>
<reference key="1">
    <citation type="journal article" date="2003" name="Genome Res.">
        <title>Comparative genome analysis of Vibrio vulnificus, a marine pathogen.</title>
        <authorList>
            <person name="Chen C.-Y."/>
            <person name="Wu K.-M."/>
            <person name="Chang Y.-C."/>
            <person name="Chang C.-H."/>
            <person name="Tsai H.-C."/>
            <person name="Liao T.-L."/>
            <person name="Liu Y.-M."/>
            <person name="Chen H.-J."/>
            <person name="Shen A.B.-T."/>
            <person name="Li J.-C."/>
            <person name="Su T.-L."/>
            <person name="Shao C.-P."/>
            <person name="Lee C.-T."/>
            <person name="Hor L.-I."/>
            <person name="Tsai S.-F."/>
        </authorList>
    </citation>
    <scope>NUCLEOTIDE SEQUENCE [LARGE SCALE GENOMIC DNA]</scope>
    <source>
        <strain>YJ016</strain>
    </source>
</reference>